<evidence type="ECO:0000255" key="1">
    <source>
        <dbReference type="HAMAP-Rule" id="MF_00095"/>
    </source>
</evidence>
<sequence>MQFTTPLQSAILIKRYKRFLADVRRPDGQIITLHCANTGAMTGCATPGDTVWYSSSDNPKRKYPSSWELTHTQAGDWICINTLRANTLVYEAIAQQRIGEVSGYTKIRSEVRYGAENSRIDLLLQAEDRPDCYIEVKSVTLLQSACGYFPDAVTERGQKHLRELQHQVQSGVRAVLFFAVLHSGITHVRAARHIDPRYAQLLAQASDLGVEVLCYGAQINPAGIRLTQPLPVTV</sequence>
<protein>
    <recommendedName>
        <fullName evidence="1">Sugar fermentation stimulation protein homolog</fullName>
    </recommendedName>
</protein>
<organism>
    <name type="scientific">Edwardsiella ictaluri (strain 93-146)</name>
    <dbReference type="NCBI Taxonomy" id="634503"/>
    <lineage>
        <taxon>Bacteria</taxon>
        <taxon>Pseudomonadati</taxon>
        <taxon>Pseudomonadota</taxon>
        <taxon>Gammaproteobacteria</taxon>
        <taxon>Enterobacterales</taxon>
        <taxon>Hafniaceae</taxon>
        <taxon>Edwardsiella</taxon>
    </lineage>
</organism>
<dbReference type="EMBL" id="CP001600">
    <property type="protein sequence ID" value="ACR68012.1"/>
    <property type="molecule type" value="Genomic_DNA"/>
</dbReference>
<dbReference type="RefSeq" id="WP_015870205.1">
    <property type="nucleotide sequence ID" value="NZ_CP169062.1"/>
</dbReference>
<dbReference type="SMR" id="C5BH76"/>
<dbReference type="STRING" id="67780.B6E78_14575"/>
<dbReference type="GeneID" id="69537849"/>
<dbReference type="KEGG" id="eic:NT01EI_0791"/>
<dbReference type="PATRIC" id="fig|634503.3.peg.717"/>
<dbReference type="HOGENOM" id="CLU_052299_2_0_6"/>
<dbReference type="OrthoDB" id="9802365at2"/>
<dbReference type="Proteomes" id="UP000001485">
    <property type="component" value="Chromosome"/>
</dbReference>
<dbReference type="GO" id="GO:0003677">
    <property type="term" value="F:DNA binding"/>
    <property type="evidence" value="ECO:0007669"/>
    <property type="project" value="InterPro"/>
</dbReference>
<dbReference type="CDD" id="cd22359">
    <property type="entry name" value="SfsA-like_bacterial"/>
    <property type="match status" value="1"/>
</dbReference>
<dbReference type="FunFam" id="2.40.50.580:FF:000001">
    <property type="entry name" value="Sugar fermentation stimulation protein A"/>
    <property type="match status" value="1"/>
</dbReference>
<dbReference type="FunFam" id="3.40.1350.60:FF:000001">
    <property type="entry name" value="Sugar fermentation stimulation protein A"/>
    <property type="match status" value="1"/>
</dbReference>
<dbReference type="Gene3D" id="2.40.50.580">
    <property type="match status" value="1"/>
</dbReference>
<dbReference type="Gene3D" id="3.40.1350.60">
    <property type="match status" value="1"/>
</dbReference>
<dbReference type="HAMAP" id="MF_00095">
    <property type="entry name" value="SfsA"/>
    <property type="match status" value="1"/>
</dbReference>
<dbReference type="InterPro" id="IPR005224">
    <property type="entry name" value="SfsA"/>
</dbReference>
<dbReference type="InterPro" id="IPR040452">
    <property type="entry name" value="SfsA_C"/>
</dbReference>
<dbReference type="InterPro" id="IPR041465">
    <property type="entry name" value="SfsA_N"/>
</dbReference>
<dbReference type="NCBIfam" id="TIGR00230">
    <property type="entry name" value="sfsA"/>
    <property type="match status" value="1"/>
</dbReference>
<dbReference type="PANTHER" id="PTHR30545">
    <property type="entry name" value="SUGAR FERMENTATION STIMULATION PROTEIN A"/>
    <property type="match status" value="1"/>
</dbReference>
<dbReference type="PANTHER" id="PTHR30545:SF2">
    <property type="entry name" value="SUGAR FERMENTATION STIMULATION PROTEIN A"/>
    <property type="match status" value="1"/>
</dbReference>
<dbReference type="Pfam" id="PF03749">
    <property type="entry name" value="SfsA"/>
    <property type="match status" value="1"/>
</dbReference>
<dbReference type="Pfam" id="PF17746">
    <property type="entry name" value="SfsA_N"/>
    <property type="match status" value="1"/>
</dbReference>
<gene>
    <name evidence="1" type="primary">sfsA</name>
    <name type="ordered locus">NT01EI_0791</name>
</gene>
<proteinExistence type="inferred from homology"/>
<feature type="chain" id="PRO_1000202721" description="Sugar fermentation stimulation protein homolog">
    <location>
        <begin position="1"/>
        <end position="234"/>
    </location>
</feature>
<accession>C5BH76</accession>
<comment type="similarity">
    <text evidence="1">Belongs to the SfsA family.</text>
</comment>
<name>SFSA_EDWI9</name>
<reference key="1">
    <citation type="submission" date="2009-03" db="EMBL/GenBank/DDBJ databases">
        <title>Complete genome sequence of Edwardsiella ictaluri 93-146.</title>
        <authorList>
            <person name="Williams M.L."/>
            <person name="Gillaspy A.F."/>
            <person name="Dyer D.W."/>
            <person name="Thune R.L."/>
            <person name="Waldbieser G.C."/>
            <person name="Schuster S.C."/>
            <person name="Gipson J."/>
            <person name="Zaitshik J."/>
            <person name="Landry C."/>
            <person name="Lawrence M.L."/>
        </authorList>
    </citation>
    <scope>NUCLEOTIDE SEQUENCE [LARGE SCALE GENOMIC DNA]</scope>
    <source>
        <strain>93-146</strain>
    </source>
</reference>